<accession>P0C0D4</accession>
<accession>Q491Q0</accession>
<accession>Q7ATC1</accession>
<accession>Q9A1W9</accession>
<feature type="chain" id="PRO_0000125239" description="Large ribosomal subunit protein uL22">
    <location>
        <begin position="1"/>
        <end position="114"/>
    </location>
</feature>
<name>RL22_STRP1</name>
<organism>
    <name type="scientific">Streptococcus pyogenes serotype M1</name>
    <dbReference type="NCBI Taxonomy" id="301447"/>
    <lineage>
        <taxon>Bacteria</taxon>
        <taxon>Bacillati</taxon>
        <taxon>Bacillota</taxon>
        <taxon>Bacilli</taxon>
        <taxon>Lactobacillales</taxon>
        <taxon>Streptococcaceae</taxon>
        <taxon>Streptococcus</taxon>
    </lineage>
</organism>
<gene>
    <name evidence="1" type="primary">rplV</name>
    <name type="ordered locus">SPy_0055</name>
    <name type="ordered locus">M5005_Spy0049</name>
</gene>
<comment type="function">
    <text evidence="1">This protein binds specifically to 23S rRNA; its binding is stimulated by other ribosomal proteins, e.g. L4, L17, and L20. It is important during the early stages of 50S assembly. It makes multiple contacts with different domains of the 23S rRNA in the assembled 50S subunit and ribosome (By similarity).</text>
</comment>
<comment type="function">
    <text evidence="1">The globular domain of the protein is located near the polypeptide exit tunnel on the outside of the subunit, while an extended beta-hairpin is found that lines the wall of the exit tunnel in the center of the 70S ribosome.</text>
</comment>
<comment type="subunit">
    <text evidence="1">Part of the 50S ribosomal subunit.</text>
</comment>
<comment type="similarity">
    <text evidence="1">Belongs to the universal ribosomal protein uL22 family.</text>
</comment>
<keyword id="KW-1185">Reference proteome</keyword>
<keyword id="KW-0687">Ribonucleoprotein</keyword>
<keyword id="KW-0689">Ribosomal protein</keyword>
<keyword id="KW-0694">RNA-binding</keyword>
<keyword id="KW-0699">rRNA-binding</keyword>
<proteinExistence type="inferred from homology"/>
<protein>
    <recommendedName>
        <fullName evidence="1">Large ribosomal subunit protein uL22</fullName>
    </recommendedName>
    <alternativeName>
        <fullName evidence="2">50S ribosomal protein L22</fullName>
    </alternativeName>
</protein>
<sequence>MAEITSAKAMARTVRVSPRKTRLVLDLIRGKKVADAIAILKFTPNKAARVIEKTLNSAIANAENNFGLEKANLVVSETFANEGPTMKRFRPRAKGSASPINKRTTHVTVVVSEK</sequence>
<evidence type="ECO:0000255" key="1">
    <source>
        <dbReference type="HAMAP-Rule" id="MF_01331"/>
    </source>
</evidence>
<evidence type="ECO:0000305" key="2"/>
<reference key="1">
    <citation type="journal article" date="2001" name="Proc. Natl. Acad. Sci. U.S.A.">
        <title>Complete genome sequence of an M1 strain of Streptococcus pyogenes.</title>
        <authorList>
            <person name="Ferretti J.J."/>
            <person name="McShan W.M."/>
            <person name="Ajdic D.J."/>
            <person name="Savic D.J."/>
            <person name="Savic G."/>
            <person name="Lyon K."/>
            <person name="Primeaux C."/>
            <person name="Sezate S."/>
            <person name="Suvorov A.N."/>
            <person name="Kenton S."/>
            <person name="Lai H.S."/>
            <person name="Lin S.P."/>
            <person name="Qian Y."/>
            <person name="Jia H.G."/>
            <person name="Najar F.Z."/>
            <person name="Ren Q."/>
            <person name="Zhu H."/>
            <person name="Song L."/>
            <person name="White J."/>
            <person name="Yuan X."/>
            <person name="Clifton S.W."/>
            <person name="Roe B.A."/>
            <person name="McLaughlin R.E."/>
        </authorList>
    </citation>
    <scope>NUCLEOTIDE SEQUENCE [LARGE SCALE GENOMIC DNA]</scope>
    <source>
        <strain>ATCC 700294 / SF370 / Serotype M1</strain>
    </source>
</reference>
<reference key="2">
    <citation type="journal article" date="2005" name="J. Infect. Dis.">
        <title>Evolutionary origin and emergence of a highly successful clone of serotype M1 group A Streptococcus involved multiple horizontal gene transfer events.</title>
        <authorList>
            <person name="Sumby P."/>
            <person name="Porcella S.F."/>
            <person name="Madrigal A.G."/>
            <person name="Barbian K.D."/>
            <person name="Virtaneva K."/>
            <person name="Ricklefs S.M."/>
            <person name="Sturdevant D.E."/>
            <person name="Graham M.R."/>
            <person name="Vuopio-Varkila J."/>
            <person name="Hoe N.P."/>
            <person name="Musser J.M."/>
        </authorList>
    </citation>
    <scope>NUCLEOTIDE SEQUENCE [LARGE SCALE GENOMIC DNA]</scope>
    <source>
        <strain>ATCC BAA-947 / MGAS5005 / Serotype M1</strain>
    </source>
</reference>
<dbReference type="EMBL" id="AE004092">
    <property type="protein sequence ID" value="AAK33187.1"/>
    <property type="molecule type" value="Genomic_DNA"/>
</dbReference>
<dbReference type="EMBL" id="CP000017">
    <property type="protein sequence ID" value="AAZ50668.1"/>
    <property type="molecule type" value="Genomic_DNA"/>
</dbReference>
<dbReference type="RefSeq" id="NP_268465.1">
    <property type="nucleotide sequence ID" value="NC_002737.2"/>
</dbReference>
<dbReference type="SMR" id="P0C0D4"/>
<dbReference type="PaxDb" id="1314-HKU360_00082"/>
<dbReference type="KEGG" id="spy:SPy_0055"/>
<dbReference type="KEGG" id="spz:M5005_Spy0049"/>
<dbReference type="PATRIC" id="fig|160490.10.peg.49"/>
<dbReference type="HOGENOM" id="CLU_083987_3_3_9"/>
<dbReference type="OMA" id="KRIQPRA"/>
<dbReference type="PRO" id="PR:P0C0D4"/>
<dbReference type="Proteomes" id="UP000000750">
    <property type="component" value="Chromosome"/>
</dbReference>
<dbReference type="GO" id="GO:0022625">
    <property type="term" value="C:cytosolic large ribosomal subunit"/>
    <property type="evidence" value="ECO:0007669"/>
    <property type="project" value="TreeGrafter"/>
</dbReference>
<dbReference type="GO" id="GO:0019843">
    <property type="term" value="F:rRNA binding"/>
    <property type="evidence" value="ECO:0007669"/>
    <property type="project" value="UniProtKB-UniRule"/>
</dbReference>
<dbReference type="GO" id="GO:0003735">
    <property type="term" value="F:structural constituent of ribosome"/>
    <property type="evidence" value="ECO:0007669"/>
    <property type="project" value="InterPro"/>
</dbReference>
<dbReference type="GO" id="GO:0006412">
    <property type="term" value="P:translation"/>
    <property type="evidence" value="ECO:0007669"/>
    <property type="project" value="UniProtKB-UniRule"/>
</dbReference>
<dbReference type="CDD" id="cd00336">
    <property type="entry name" value="Ribosomal_L22"/>
    <property type="match status" value="1"/>
</dbReference>
<dbReference type="FunFam" id="3.90.470.10:FF:000001">
    <property type="entry name" value="50S ribosomal protein L22"/>
    <property type="match status" value="1"/>
</dbReference>
<dbReference type="Gene3D" id="3.90.470.10">
    <property type="entry name" value="Ribosomal protein L22/L17"/>
    <property type="match status" value="1"/>
</dbReference>
<dbReference type="HAMAP" id="MF_01331_B">
    <property type="entry name" value="Ribosomal_uL22_B"/>
    <property type="match status" value="1"/>
</dbReference>
<dbReference type="InterPro" id="IPR001063">
    <property type="entry name" value="Ribosomal_uL22"/>
</dbReference>
<dbReference type="InterPro" id="IPR005727">
    <property type="entry name" value="Ribosomal_uL22_bac/chlpt-type"/>
</dbReference>
<dbReference type="InterPro" id="IPR047867">
    <property type="entry name" value="Ribosomal_uL22_bac/org-type"/>
</dbReference>
<dbReference type="InterPro" id="IPR018260">
    <property type="entry name" value="Ribosomal_uL22_CS"/>
</dbReference>
<dbReference type="InterPro" id="IPR036394">
    <property type="entry name" value="Ribosomal_uL22_sf"/>
</dbReference>
<dbReference type="NCBIfam" id="TIGR01044">
    <property type="entry name" value="rplV_bact"/>
    <property type="match status" value="1"/>
</dbReference>
<dbReference type="PANTHER" id="PTHR13501">
    <property type="entry name" value="CHLOROPLAST 50S RIBOSOMAL PROTEIN L22-RELATED"/>
    <property type="match status" value="1"/>
</dbReference>
<dbReference type="PANTHER" id="PTHR13501:SF8">
    <property type="entry name" value="LARGE RIBOSOMAL SUBUNIT PROTEIN UL22M"/>
    <property type="match status" value="1"/>
</dbReference>
<dbReference type="Pfam" id="PF00237">
    <property type="entry name" value="Ribosomal_L22"/>
    <property type="match status" value="1"/>
</dbReference>
<dbReference type="SUPFAM" id="SSF54843">
    <property type="entry name" value="Ribosomal protein L22"/>
    <property type="match status" value="1"/>
</dbReference>
<dbReference type="PROSITE" id="PS00464">
    <property type="entry name" value="RIBOSOMAL_L22"/>
    <property type="match status" value="1"/>
</dbReference>